<feature type="signal peptide">
    <location>
        <begin position="1"/>
        <end position="23"/>
    </location>
</feature>
<feature type="chain" id="PRO_0000020728" description="Alpha-N-acetylglucosaminidase 82 kDa form">
    <location>
        <begin position="24"/>
        <end position="743"/>
    </location>
</feature>
<feature type="chain" id="PRO_0000020729" description="Alpha-N-acetylglucosaminidase 77 kDa form">
    <location>
        <begin position="59"/>
        <end position="743"/>
    </location>
</feature>
<feature type="glycosylation site" description="N-linked (GlcNAc...) asparagine" evidence="22 25">
    <location>
        <position position="261"/>
    </location>
</feature>
<feature type="glycosylation site" description="N-linked (GlcNAc...) asparagine" evidence="22 25">
    <location>
        <position position="272"/>
    </location>
</feature>
<feature type="glycosylation site" description="N-linked (GlcNAc...) asparagine" evidence="22 25">
    <location>
        <position position="435"/>
    </location>
</feature>
<feature type="glycosylation site" description="N-linked (GlcNAc...) asparagine" evidence="22 25">
    <location>
        <position position="503"/>
    </location>
</feature>
<feature type="glycosylation site" description="N-linked (GlcNAc...) asparagine" evidence="22 25">
    <location>
        <position position="526"/>
    </location>
</feature>
<feature type="glycosylation site" description="N-linked (GlcNAc...) asparagine" evidence="12 22 25">
    <location>
        <position position="532"/>
    </location>
</feature>
<feature type="sequence variant" id="VAR_054699" description="In MPS3B; no enzyme activity; synthesizes a polypeptide with a molecular size similar to that of the wild-type; dbSNP:rs2143075651." evidence="3">
    <original>L</original>
    <variation>F</variation>
    <location>
        <position position="35"/>
    </location>
</feature>
<feature type="sequence variant" id="VAR_054700" description="In MPS3B; decreases the enzyme activity markedly; dbSNP:rs1460260015." evidence="11">
    <original>R</original>
    <variation>W</variation>
    <location>
        <position position="38"/>
    </location>
</feature>
<feature type="sequence variant" id="VAR_054701" description="In MPS3B; dbSNP:rs867910252." evidence="20">
    <original>F</original>
    <variation>C</variation>
    <location>
        <position position="48"/>
    </location>
</feature>
<feature type="sequence variant" id="VAR_025489" description="In MPS3B; results in partially degraded polypeptide in a 16-hour chase experiment suggesting that L-48 NAGLU affects the processing and stability of the gene; some L-48 NAGLU is being correctly sorted to the lysosomal compartment; dbSNP:rs104894599." evidence="1 2">
    <original>F</original>
    <variation>L</variation>
    <location>
        <position position="48"/>
    </location>
</feature>
<feature type="sequence variant" id="VAR_054702" description="In MPS3B." evidence="1">
    <original>G</original>
    <variation>S</variation>
    <location>
        <position position="69"/>
    </location>
</feature>
<feature type="sequence variant" id="VAR_054703" description="In MPS3B; decreases the enzyme activity markedly; dbSNP:rs1599253805." evidence="11">
    <original>V</original>
    <variation>G</variation>
    <location>
        <position position="77"/>
    </location>
</feature>
<feature type="sequence variant" id="VAR_008979" description="In MPS3B." evidence="11 21">
    <original>G</original>
    <variation>C</variation>
    <location>
        <position position="79"/>
    </location>
</feature>
<feature type="sequence variant" id="VAR_054704" description="In MPS3B; dbSNP:rs1276484671." evidence="4">
    <original>G</original>
    <variation>S</variation>
    <location>
        <position position="79"/>
    </location>
</feature>
<feature type="sequence variant" id="VAR_054705" description="In MPS3B; no enzyme activity; synthesizes a polypeptide with a molecular size similar to that of the wild-type; dbSNP:rs1599253815." evidence="3">
    <original>G</original>
    <variation>D</variation>
    <location>
        <position position="82"/>
    </location>
</feature>
<feature type="sequence variant" id="VAR_005007" description="In MPS3B; dbSNP:rs1555621454." evidence="19">
    <original>Y</original>
    <variation>H</variation>
    <location>
        <position position="92"/>
    </location>
</feature>
<feature type="sequence variant" id="VAR_008980" description="In MPS3B." evidence="21">
    <original>H</original>
    <variation>R</variation>
    <location>
        <position position="100"/>
    </location>
</feature>
<feature type="sequence variant" id="VAR_005008" description="In MPS3B; dbSNP:rs758785463." evidence="19">
    <original>P</original>
    <variation>S</variation>
    <location>
        <position position="115"/>
    </location>
</feature>
<feature type="sequence variant" id="VAR_054706" description="In MPS3B; does not yield active enzyme; dbSNP:rs2092909477." evidence="6 11">
    <original>R</original>
    <variation>C</variation>
    <location>
        <position position="130"/>
    </location>
</feature>
<feature type="sequence variant" id="VAR_005009" description="In MPS3B; dbSNP:rs753520553." evidence="3 8 18 19 20 21">
    <original>Y</original>
    <variation>C</variation>
    <location>
        <position position="140"/>
    </location>
</feature>
<feature type="sequence variant" id="VAR_008981" description="In MPS3B." evidence="21">
    <location>
        <position position="142"/>
    </location>
</feature>
<feature type="sequence variant" id="VAR_079424" description="In MPS3B." evidence="14">
    <location>
        <begin position="153"/>
        <end position="743"/>
    </location>
</feature>
<feature type="sequence variant" id="VAR_005010" description="In MPS3B; dbSNP:rs1352416909." evidence="5 19">
    <original>E</original>
    <variation>K</variation>
    <location>
        <position position="153"/>
    </location>
</feature>
<feature type="sequence variant" id="VAR_054707" description="In MPS3B; does not yield active enzyme; dbSNP:rs770684838." evidence="6">
    <original>I</original>
    <variation>R</variation>
    <location>
        <position position="154"/>
    </location>
</feature>
<feature type="sequence variant" id="VAR_054708" description="In MPS3B; no enzyme activity; synthesizes a polypeptide with a molecular size similar to that of the wild-type." evidence="3">
    <original>W</original>
    <variation>C</variation>
    <location>
        <position position="156"/>
    </location>
</feature>
<feature type="sequence variant" id="VAR_054709" description="In MPS3B; dbSNP:rs747155746." evidence="1">
    <original>H</original>
    <variation>P</variation>
    <location>
        <position position="227"/>
    </location>
</feature>
<feature type="sequence variant" id="VAR_054710" description="In MPS3B; dbSNP:rs104894601." evidence="3 4 20">
    <original>R</original>
    <variation>C</variation>
    <location>
        <position position="234"/>
    </location>
</feature>
<feature type="sequence variant" id="VAR_054711" description="In MPS3B." evidence="7">
    <original>V</original>
    <variation>M</variation>
    <location>
        <position position="241"/>
    </location>
</feature>
<feature type="sequence variant" id="VAR_054712" description="In MPS3B; no enzyme activity." evidence="8">
    <original>L</original>
    <variation>P</variation>
    <location>
        <position position="242"/>
    </location>
</feature>
<feature type="sequence variant" id="VAR_008982" description="In MPS3B." evidence="21">
    <original>P</original>
    <variation>L</variation>
    <location>
        <position position="243"/>
    </location>
</feature>
<feature type="sequence variant" id="VAR_054713" description="In MPS3B; produces 12.7% residual enzyme activity; dbSNP:rs1415169705." evidence="11">
    <original>A</original>
    <variation>P</variation>
    <location>
        <position position="246"/>
    </location>
</feature>
<feature type="sequence variant" id="VAR_054714" description="In MPS3B; dbSNP:rs1465855291." evidence="1 5">
    <original>H</original>
    <variation>R</variation>
    <location>
        <position position="248"/>
    </location>
</feature>
<feature type="sequence variant" id="VAR_054715" description="In MPS3B." evidence="20">
    <original>W</original>
    <variation>R</variation>
    <location>
        <position position="268"/>
    </location>
</feature>
<feature type="sequence variant" id="VAR_008983" description="In MPS3B." evidence="21">
    <original>C</original>
    <variation>F</variation>
    <location>
        <position position="277"/>
    </location>
</feature>
<feature type="sequence variant" id="VAR_008984" description="In MPS3B; dbSNP:rs1392732615." evidence="21">
    <original>L</original>
    <variation>P</variation>
    <location>
        <position position="280"/>
    </location>
</feature>
<feature type="sequence variant" id="VAR_008985" description="In MPS3B; dbSNP:rs1358994052." evidence="1 3 8 21">
    <original>G</original>
    <variation>R</variation>
    <location>
        <position position="292"/>
    </location>
</feature>
<feature type="sequence variant" id="VAR_054716" description="In MPS3B; does not yield active enzyme; dbSNP:rs1305299665." evidence="6 11">
    <original>Y</original>
    <variation>C</variation>
    <location>
        <position position="309"/>
    </location>
</feature>
<feature type="sequence variant" id="VAR_025490" description="In MPS3B; dbSNP:rs104894600." evidence="7">
    <original>F</original>
    <variation>L</variation>
    <location>
        <position position="314"/>
    </location>
</feature>
<feature type="sequence variant" id="VAR_054717" description="In MPS3B; dbSNP:rs749140168." evidence="1">
    <original>V</original>
    <variation>F</variation>
    <location>
        <position position="334"/>
    </location>
</feature>
<feature type="sequence variant" id="VAR_054718" description="In MPS3B; decreases the enzyme activity markedly; dbSNP:rs768918822." evidence="11">
    <original>Y</original>
    <variation>C</variation>
    <location>
        <position position="335"/>
    </location>
</feature>
<feature type="sequence variant" id="VAR_005011" description="In MPS3B; dbSNP:rs368687817." evidence="19">
    <original>P</original>
    <variation>L</variation>
    <location>
        <position position="358"/>
    </location>
</feature>
<feature type="sequence variant" id="VAR_074607" description="In CMT2V; dbSNP:rs796052122." evidence="13">
    <original>I</original>
    <variation>T</variation>
    <location>
        <position position="403"/>
    </location>
</feature>
<feature type="sequence variant" id="VAR_054719" description="In MPS3B; dbSNP:rs574688121." evidence="1">
    <original>F</original>
    <variation>S</variation>
    <location>
        <position position="410"/>
    </location>
</feature>
<feature type="sequence variant" id="VAR_054720" description="In MPS3B; does not yield active enzyme." evidence="6">
    <original>G</original>
    <variation>E</variation>
    <location>
        <position position="412"/>
    </location>
</feature>
<feature type="sequence variant" id="VAR_054721" description="In MPS3B; no enzyme activity; dbSNP:rs768814260." evidence="1 8 11">
    <original>H</original>
    <variation>R</variation>
    <location>
        <position position="414"/>
    </location>
</feature>
<feature type="sequence variant" id="VAR_054722" description="In MPS3B." evidence="5">
    <original>T</original>
    <variation>I</variation>
    <location>
        <position position="437"/>
    </location>
</feature>
<feature type="sequence variant" id="VAR_054723" description="In MPS3B; no enzyme activity; dbSNP:rs114625063." evidence="8">
    <original>E</original>
    <variation>K</variation>
    <location>
        <position position="446"/>
    </location>
</feature>
<feature type="sequence variant" id="VAR_008986" description="In MPS3B; dbSNP:rs1183634153." evidence="8 11 21">
    <original>E</original>
    <variation>K</variation>
    <location>
        <position position="452"/>
    </location>
</feature>
<feature type="sequence variant" id="VAR_054724" description="In MPS3B; dbSNP:rs375103824." evidence="18">
    <original>Y</original>
    <variation>C</variation>
    <location>
        <position position="455"/>
    </location>
</feature>
<feature type="sequence variant" id="VAR_054725" description="In MPS3B." evidence="4">
    <original>W</original>
    <variation>G</variation>
    <location>
        <position position="474"/>
    </location>
</feature>
<feature type="sequence variant" id="VAR_054726" description="In MPS3B; no enzyme activity; dbSNP:rs200909691." evidence="8">
    <original>R</original>
    <variation>Q</variation>
    <location>
        <position position="482"/>
    </location>
</feature>
<feature type="sequence variant" id="VAR_008987" description="In MPS3B; dbSNP:rs104894596." evidence="7 11 21">
    <original>R</original>
    <variation>W</variation>
    <location>
        <position position="482"/>
    </location>
</feature>
<feature type="sequence variant" id="VAR_054727" description="In MPS3B; no enzyme activity; synthesizes a polypeptide with a molecular size similar to that of the wild-type." evidence="3">
    <original>V</original>
    <variation>G</variation>
    <location>
        <position position="501"/>
    </location>
</feature>
<feature type="sequence variant" id="VAR_054728" description="In MPS3B; no enzyme activity; dbSNP:rs773054539." evidence="8">
    <original>P</original>
    <variation>L</variation>
    <location>
        <position position="516"/>
    </location>
</feature>
<feature type="sequence variant" id="VAR_054729" description="In MPS3B; no enzyme activity; synthesizes a polypeptide with a molecular size similar to that of the wild-type; dbSNP:rs992677795." evidence="3 11">
    <original>R</original>
    <variation>W</variation>
    <location>
        <position position="520"/>
    </location>
</feature>
<feature type="sequence variant" id="VAR_025491" description="In MPS3B; accounts for approximately 6% of mutations in Australasian patients with MPS3B; dbSNP:rs104894595." evidence="1 11 18 20">
    <original>P</original>
    <variation>L</variation>
    <location>
        <position position="521"/>
    </location>
</feature>
<feature type="sequence variant" id="VAR_054730" description="In MPS3B; no enzyme activity; synthesizes a polypeptide with a molecular size similar to that of the wild-type." evidence="3">
    <original>S</original>
    <variation>Y</variation>
    <location>
        <position position="534"/>
    </location>
</feature>
<feature type="sequence variant" id="VAR_079425" description="In MPS3B; uncertain significance." evidence="14">
    <original>L</original>
    <variation>P</variation>
    <location>
        <position position="550"/>
    </location>
</feature>
<feature type="sequence variant" id="VAR_054731" description="In MPS3B." evidence="1">
    <original>L</original>
    <variation>P</variation>
    <location>
        <position position="560"/>
    </location>
</feature>
<feature type="sequence variant" id="VAR_008988" description="In MPS3B; dbSNP:rs2092928624." evidence="21">
    <original>L</original>
    <variation>R</variation>
    <location>
        <position position="561"/>
    </location>
</feature>
<feature type="sequence variant" id="VAR_025492" description="In MPS3B; does not yield active enzyme; dbSNP:rs104894598." evidence="1 7 10">
    <original>R</original>
    <variation>P</variation>
    <location>
        <position position="565"/>
    </location>
</feature>
<feature type="sequence variant" id="VAR_008989" description="In MPS3B; dbSNP:rs104894598." evidence="21">
    <original>R</original>
    <variation>Q</variation>
    <location>
        <position position="565"/>
    </location>
</feature>
<feature type="sequence variant" id="VAR_025493" description="In MPS3B; accounts for approximately 6% of the mutant alleles in Australasian patients with MPS3B; dbSNP:rs104894597." evidence="1 4 6 7 11 20">
    <original>R</original>
    <variation>W</variation>
    <location>
        <position position="565"/>
    </location>
</feature>
<feature type="sequence variant" id="VAR_054732" description="In MPS3B; dbSNP:rs1215582852." evidence="20">
    <original>L</original>
    <variation>P</variation>
    <location>
        <position position="591"/>
    </location>
</feature>
<feature type="sequence variant" id="VAR_054733" description="In MPS3B; dbSNP:rs148881970." evidence="18">
    <original>S</original>
    <variation>G</variation>
    <location>
        <position position="612"/>
    </location>
</feature>
<feature type="sequence variant" id="VAR_054734" description="In MPS3B; dbSNP:rs1555622482." evidence="1">
    <original>L</original>
    <variation>F</variation>
    <location>
        <position position="617"/>
    </location>
</feature>
<feature type="sequence variant" id="VAR_025494" description="In MPS3B; accounts for approximately 20% of MPS3B alleles in a Dutch patient group; dbSNP:rs104894594." evidence="1">
    <original>R</original>
    <variation>C</variation>
    <location>
        <position position="643"/>
    </location>
</feature>
<feature type="sequence variant" id="VAR_005012" description="In MPS3B; dbSNP:rs104894593." evidence="15">
    <original>R</original>
    <variation>H</variation>
    <location>
        <position position="643"/>
    </location>
</feature>
<feature type="sequence variant" id="VAR_054735" description="In MPS3B; no enzyme activity; synthesizes a polypeptide with a molecular size similar to that of the wild-type." evidence="3">
    <original>W</original>
    <variation>C</variation>
    <location>
        <position position="649"/>
    </location>
</feature>
<feature type="sequence variant" id="VAR_054736" description="In MPS3B; dbSNP:rs527236037." evidence="1">
    <original>G</original>
    <variation>E</variation>
    <location>
        <position position="650"/>
    </location>
</feature>
<feature type="sequence variant" id="VAR_054737" description="In MPS3B." evidence="4">
    <original>Y</original>
    <variation>F</variation>
    <location>
        <position position="658"/>
    </location>
</feature>
<feature type="sequence variant" id="VAR_005013" description="In MPS3B; dbSNP:rs746006696." evidence="19">
    <original>A</original>
    <variation>V</variation>
    <location>
        <position position="664"/>
    </location>
</feature>
<feature type="sequence variant" id="VAR_054738" description="In MPS3B; dbSNP:rs763299645." evidence="1 18">
    <original>R</original>
    <variation>C</variation>
    <location>
        <position position="674"/>
    </location>
</feature>
<feature type="sequence variant" id="VAR_005014" description="In MPS3B; dbSNP:rs104894590." evidence="18 21">
    <original>R</original>
    <variation>H</variation>
    <location>
        <position position="674"/>
    </location>
</feature>
<feature type="sequence variant" id="VAR_054739" description="In MPS3B." evidence="1">
    <original>R</original>
    <variation>P</variation>
    <location>
        <position position="676"/>
    </location>
</feature>
<feature type="sequence variant" id="VAR_005015" description="In MPS3B; dbSNP:rs2092930339." evidence="5 19">
    <original>L</original>
    <variation>R</variation>
    <location>
        <position position="682"/>
    </location>
</feature>
<feature type="sequence variant" id="VAR_008990" description="In MPS3B; dbSNP:rs1364203992." evidence="20 21">
    <original>E</original>
    <variation>K</variation>
    <location>
        <position position="705"/>
    </location>
</feature>
<feature type="sequence variant" id="VAR_008991" description="In dbSNP:rs86312." evidence="1 9 15 16 17 21">
    <original>R</original>
    <variation>G</variation>
    <location>
        <position position="737"/>
    </location>
</feature>
<feature type="sequence conflict" description="In Ref. 2; AA sequence." evidence="23" ref="2">
    <original>A</original>
    <variation>L</variation>
    <location>
        <position position="551"/>
    </location>
</feature>
<feature type="sequence conflict" description="In Ref. 2; AA sequence." evidence="23" ref="2">
    <original>S</original>
    <variation>L</variation>
    <location>
        <position position="553"/>
    </location>
</feature>
<feature type="helix" evidence="26">
    <location>
        <begin position="25"/>
        <end position="40"/>
    </location>
</feature>
<feature type="helix" evidence="26">
    <location>
        <begin position="42"/>
        <end position="45"/>
    </location>
</feature>
<feature type="strand" evidence="26">
    <location>
        <begin position="48"/>
        <end position="52"/>
    </location>
</feature>
<feature type="helix" evidence="26">
    <location>
        <begin position="54"/>
        <end position="56"/>
    </location>
</feature>
<feature type="strand" evidence="26">
    <location>
        <begin position="64"/>
        <end position="69"/>
    </location>
</feature>
<feature type="strand" evidence="26">
    <location>
        <begin position="75"/>
        <end position="81"/>
    </location>
</feature>
<feature type="helix" evidence="26">
    <location>
        <begin position="82"/>
        <end position="95"/>
    </location>
</feature>
<feature type="strand" evidence="26">
    <location>
        <begin position="100"/>
        <end position="102"/>
    </location>
</feature>
<feature type="strand" evidence="26">
    <location>
        <begin position="105"/>
        <end position="107"/>
    </location>
</feature>
<feature type="strand" evidence="26">
    <location>
        <begin position="121"/>
        <end position="124"/>
    </location>
</feature>
<feature type="strand" evidence="26">
    <location>
        <begin position="128"/>
        <end position="132"/>
    </location>
</feature>
<feature type="helix" evidence="26">
    <location>
        <begin position="137"/>
        <end position="140"/>
    </location>
</feature>
<feature type="helix" evidence="26">
    <location>
        <begin position="147"/>
        <end position="159"/>
    </location>
</feature>
<feature type="strand" evidence="26">
    <location>
        <begin position="164"/>
        <end position="166"/>
    </location>
</feature>
<feature type="helix" evidence="26">
    <location>
        <begin position="171"/>
        <end position="182"/>
    </location>
</feature>
<feature type="helix" evidence="26">
    <location>
        <begin position="186"/>
        <end position="192"/>
    </location>
</feature>
<feature type="helix" evidence="26">
    <location>
        <begin position="196"/>
        <end position="198"/>
    </location>
</feature>
<feature type="helix" evidence="26">
    <location>
        <begin position="199"/>
        <end position="203"/>
    </location>
</feature>
<feature type="helix" evidence="26">
    <location>
        <begin position="216"/>
        <end position="235"/>
    </location>
</feature>
<feature type="strand" evidence="26">
    <location>
        <begin position="239"/>
        <end position="243"/>
    </location>
</feature>
<feature type="strand" evidence="26">
    <location>
        <begin position="247"/>
        <end position="249"/>
    </location>
</feature>
<feature type="helix" evidence="26">
    <location>
        <begin position="253"/>
        <end position="256"/>
    </location>
</feature>
<feature type="strand" evidence="26">
    <location>
        <begin position="262"/>
        <end position="264"/>
    </location>
</feature>
<feature type="turn" evidence="26">
    <location>
        <begin position="273"/>
        <end position="275"/>
    </location>
</feature>
<feature type="strand" evidence="26">
    <location>
        <begin position="279"/>
        <end position="281"/>
    </location>
</feature>
<feature type="helix" evidence="26">
    <location>
        <begin position="287"/>
        <end position="303"/>
    </location>
</feature>
<feature type="strand" evidence="26">
    <location>
        <begin position="307"/>
        <end position="310"/>
    </location>
</feature>
<feature type="helix" evidence="26">
    <location>
        <begin position="324"/>
        <end position="339"/>
    </location>
</feature>
<feature type="strand" evidence="26">
    <location>
        <begin position="346"/>
        <end position="350"/>
    </location>
</feature>
<feature type="helix" evidence="26">
    <location>
        <begin position="352"/>
        <end position="356"/>
    </location>
</feature>
<feature type="turn" evidence="26">
    <location>
        <begin position="358"/>
        <end position="360"/>
    </location>
</feature>
<feature type="helix" evidence="26">
    <location>
        <begin position="363"/>
        <end position="370"/>
    </location>
</feature>
<feature type="strand" evidence="26">
    <location>
        <begin position="377"/>
        <end position="382"/>
    </location>
</feature>
<feature type="turn" evidence="26">
    <location>
        <begin position="383"/>
        <end position="387"/>
    </location>
</feature>
<feature type="helix" evidence="26">
    <location>
        <begin position="391"/>
        <end position="393"/>
    </location>
</feature>
<feature type="helix" evidence="26">
    <location>
        <begin position="395"/>
        <end position="398"/>
    </location>
</feature>
<feature type="strand" evidence="26">
    <location>
        <begin position="402"/>
        <end position="406"/>
    </location>
</feature>
<feature type="helix" evidence="26">
    <location>
        <begin position="420"/>
        <end position="432"/>
    </location>
</feature>
<feature type="strand" evidence="26">
    <location>
        <begin position="438"/>
        <end position="443"/>
    </location>
</feature>
<feature type="helix" evidence="26">
    <location>
        <begin position="452"/>
        <end position="461"/>
    </location>
</feature>
<feature type="helix" evidence="26">
    <location>
        <begin position="471"/>
        <end position="483"/>
    </location>
</feature>
<feature type="helix" evidence="26">
    <location>
        <begin position="488"/>
        <end position="499"/>
    </location>
</feature>
<feature type="turn" evidence="26">
    <location>
        <begin position="500"/>
        <end position="502"/>
    </location>
</feature>
<feature type="helix" evidence="26">
    <location>
        <begin position="516"/>
        <end position="518"/>
    </location>
</feature>
<feature type="helix" evidence="26">
    <location>
        <begin position="533"/>
        <end position="545"/>
    </location>
</feature>
<feature type="helix" evidence="26">
    <location>
        <begin position="547"/>
        <end position="550"/>
    </location>
</feature>
<feature type="helix" evidence="26">
    <location>
        <begin position="554"/>
        <end position="584"/>
    </location>
</feature>
<feature type="helix" evidence="26">
    <location>
        <begin position="588"/>
        <end position="600"/>
    </location>
</feature>
<feature type="helix" evidence="26">
    <location>
        <begin position="602"/>
        <end position="610"/>
    </location>
</feature>
<feature type="helix" evidence="26">
    <location>
        <begin position="614"/>
        <end position="616"/>
    </location>
</feature>
<feature type="helix" evidence="26">
    <location>
        <begin position="618"/>
        <end position="628"/>
    </location>
</feature>
<feature type="helix" evidence="26">
    <location>
        <begin position="632"/>
        <end position="646"/>
    </location>
</feature>
<feature type="turn" evidence="26">
    <location>
        <begin position="654"/>
        <end position="659"/>
    </location>
</feature>
<feature type="helix" evidence="26">
    <location>
        <begin position="666"/>
        <end position="669"/>
    </location>
</feature>
<feature type="helix" evidence="26">
    <location>
        <begin position="671"/>
        <end position="687"/>
    </location>
</feature>
<feature type="helix" evidence="26">
    <location>
        <begin position="694"/>
        <end position="710"/>
    </location>
</feature>
<feature type="helix" evidence="26">
    <location>
        <begin position="723"/>
        <end position="740"/>
    </location>
</feature>
<keyword id="KW-0002">3D-structure</keyword>
<keyword id="KW-0144">Charcot-Marie-Tooth disease</keyword>
<keyword id="KW-0903">Direct protein sequencing</keyword>
<keyword id="KW-0225">Disease variant</keyword>
<keyword id="KW-0325">Glycoprotein</keyword>
<keyword id="KW-0326">Glycosidase</keyword>
<keyword id="KW-0378">Hydrolase</keyword>
<keyword id="KW-0458">Lysosome</keyword>
<keyword id="KW-0510">Mucopolysaccharidosis</keyword>
<keyword id="KW-0523">Neurodegeneration</keyword>
<keyword id="KW-0622">Neuropathy</keyword>
<keyword id="KW-1267">Proteomics identification</keyword>
<keyword id="KW-1185">Reference proteome</keyword>
<keyword id="KW-0732">Signal</keyword>
<protein>
    <recommendedName>
        <fullName>Alpha-N-acetylglucosaminidase</fullName>
        <ecNumber>3.2.1.50</ecNumber>
    </recommendedName>
    <alternativeName>
        <fullName>N-acetyl-alpha-glucosaminidase</fullName>
        <shortName>NAG</shortName>
    </alternativeName>
    <component>
        <recommendedName>
            <fullName>Alpha-N-acetylglucosaminidase 82 kDa form</fullName>
        </recommendedName>
    </component>
    <component>
        <recommendedName>
            <fullName>Alpha-N-acetylglucosaminidase 77 kDa form</fullName>
        </recommendedName>
    </component>
</protein>
<accession>P54802</accession>
<reference key="1">
    <citation type="journal article" date="1996" name="Proc. Natl. Acad. Sci. U.S.A.">
        <title>The molecular basis of Sanfilippo syndrome type B.</title>
        <authorList>
            <person name="Zhao H.G."/>
            <person name="Li H.H."/>
            <person name="Bach G."/>
            <person name="Schmidtchen A."/>
            <person name="Neufeld E.F."/>
        </authorList>
    </citation>
    <scope>NUCLEOTIDE SEQUENCE [GENOMIC DNA / MRNA]</scope>
    <scope>VARIANT GLY-737</scope>
    <scope>VARIANT MPS3B HIS-643</scope>
    <source>
        <tissue>Testis</tissue>
    </source>
</reference>
<reference key="2">
    <citation type="journal article" date="1996" name="Hum. Mol. Genet.">
        <title>Cloning and expression of the gene involved in Sanfilippo B syndrome (mucopolysaccharidosis III B).</title>
        <authorList>
            <person name="Weber B."/>
            <person name="Blanch L."/>
            <person name="Clements P.R."/>
            <person name="Scott H.S."/>
            <person name="Hopwood J.J."/>
        </authorList>
    </citation>
    <scope>NUCLEOTIDE SEQUENCE [MRNA]</scope>
    <scope>PARTIAL PROTEIN SEQUENCE</scope>
    <scope>CHARACTERIZATION</scope>
    <scope>VARIANT GLY-737</scope>
</reference>
<reference key="3">
    <citation type="journal article" date="1996" name="Mamm. Genome">
        <title>Molecular dissection of a cosmid from a gene-rich region in 17q21 and characterization of a candidate gene for alpha-N-acetylglucosaminidase with two cDNA isoforms.</title>
        <authorList>
            <person name="Zhao Z."/>
            <person name="Yazdani A."/>
            <person name="Shen Y."/>
            <person name="Sun Z.S."/>
            <person name="Bailey J."/>
            <person name="Caskey C.T."/>
            <person name="Lee C.C."/>
        </authorList>
    </citation>
    <scope>NUCLEOTIDE SEQUENCE [MRNA]</scope>
    <scope>VARIANT GLY-737</scope>
</reference>
<reference key="4">
    <citation type="journal article" date="2006" name="Nature">
        <title>DNA sequence of human chromosome 17 and analysis of rearrangement in the human lineage.</title>
        <authorList>
            <person name="Zody M.C."/>
            <person name="Garber M."/>
            <person name="Adams D.J."/>
            <person name="Sharpe T."/>
            <person name="Harrow J."/>
            <person name="Lupski J.R."/>
            <person name="Nicholson C."/>
            <person name="Searle S.M."/>
            <person name="Wilming L."/>
            <person name="Young S.K."/>
            <person name="Abouelleil A."/>
            <person name="Allen N.R."/>
            <person name="Bi W."/>
            <person name="Bloom T."/>
            <person name="Borowsky M.L."/>
            <person name="Bugalter B.E."/>
            <person name="Butler J."/>
            <person name="Chang J.L."/>
            <person name="Chen C.-K."/>
            <person name="Cook A."/>
            <person name="Corum B."/>
            <person name="Cuomo C.A."/>
            <person name="de Jong P.J."/>
            <person name="DeCaprio D."/>
            <person name="Dewar K."/>
            <person name="FitzGerald M."/>
            <person name="Gilbert J."/>
            <person name="Gibson R."/>
            <person name="Gnerre S."/>
            <person name="Goldstein S."/>
            <person name="Grafham D.V."/>
            <person name="Grocock R."/>
            <person name="Hafez N."/>
            <person name="Hagopian D.S."/>
            <person name="Hart E."/>
            <person name="Norman C.H."/>
            <person name="Humphray S."/>
            <person name="Jaffe D.B."/>
            <person name="Jones M."/>
            <person name="Kamal M."/>
            <person name="Khodiyar V.K."/>
            <person name="LaButti K."/>
            <person name="Laird G."/>
            <person name="Lehoczky J."/>
            <person name="Liu X."/>
            <person name="Lokyitsang T."/>
            <person name="Loveland J."/>
            <person name="Lui A."/>
            <person name="Macdonald P."/>
            <person name="Major J.E."/>
            <person name="Matthews L."/>
            <person name="Mauceli E."/>
            <person name="McCarroll S.A."/>
            <person name="Mihalev A.H."/>
            <person name="Mudge J."/>
            <person name="Nguyen C."/>
            <person name="Nicol R."/>
            <person name="O'Leary S.B."/>
            <person name="Osoegawa K."/>
            <person name="Schwartz D.C."/>
            <person name="Shaw-Smith C."/>
            <person name="Stankiewicz P."/>
            <person name="Steward C."/>
            <person name="Swarbreck D."/>
            <person name="Venkataraman V."/>
            <person name="Whittaker C.A."/>
            <person name="Yang X."/>
            <person name="Zimmer A.R."/>
            <person name="Bradley A."/>
            <person name="Hubbard T."/>
            <person name="Birren B.W."/>
            <person name="Rogers J."/>
            <person name="Lander E.S."/>
            <person name="Nusbaum C."/>
        </authorList>
    </citation>
    <scope>NUCLEOTIDE SEQUENCE [LARGE SCALE GENOMIC DNA]</scope>
</reference>
<reference key="5">
    <citation type="journal article" date="2004" name="Genome Res.">
        <title>The status, quality, and expansion of the NIH full-length cDNA project: the Mammalian Gene Collection (MGC).</title>
        <authorList>
            <consortium name="The MGC Project Team"/>
        </authorList>
    </citation>
    <scope>NUCLEOTIDE SEQUENCE [LARGE SCALE MRNA]</scope>
    <scope>VARIANT GLY-737</scope>
    <source>
        <tissue>Skin</tissue>
    </source>
</reference>
<reference key="6">
    <citation type="journal article" date="2009" name="J. Proteome Res.">
        <title>Glycoproteomics analysis of human liver tissue by combination of multiple enzyme digestion and hydrazide chemistry.</title>
        <authorList>
            <person name="Chen R."/>
            <person name="Jiang X."/>
            <person name="Sun D."/>
            <person name="Han G."/>
            <person name="Wang F."/>
            <person name="Ye M."/>
            <person name="Wang L."/>
            <person name="Zou H."/>
        </authorList>
    </citation>
    <scope>GLYCOSYLATION [LARGE SCALE ANALYSIS] AT ASN-532</scope>
    <source>
        <tissue>Liver</tissue>
    </source>
</reference>
<reference key="7">
    <citation type="submission" date="2015-01" db="PDB data bank">
        <title>Crystal structure of N-acetylglucosaminidase.</title>
        <authorList>
            <person name="Birrane G."/>
            <person name="Meiyappan M."/>
            <person name="Dassier A."/>
        </authorList>
    </citation>
    <scope>X-RAY CRYSTALLOGRAPHY (2.32 ANGSTROMS) OF 24-743</scope>
    <scope>GLYCOSYLATION AT ASN-261; ASN-272; ASN-435; ASN-503; ASN-526 AND ASN-532</scope>
</reference>
<reference key="8">
    <citation type="journal article" date="2015" name="Brain">
        <title>Adult-onset painful axonal polyneuropathy caused by a dominant NAGLU mutation.</title>
        <authorList>
            <person name="Tetreault M."/>
            <person name="Gonzalez M."/>
            <person name="Dicaire M.J."/>
            <person name="Allard P."/>
            <person name="Gehring K."/>
            <person name="Leblanc D."/>
            <person name="Leclerc N."/>
            <person name="Schondorf R."/>
            <person name="Mathieu J."/>
            <person name="Zuchner S."/>
            <person name="Brais B."/>
        </authorList>
    </citation>
    <scope>INVOLVEMENT IN CMT2V</scope>
    <scope>VARIANT CMT2V THR-403</scope>
</reference>
<reference key="9">
    <citation type="journal article" date="1998" name="Am. J. Hum. Genet.">
        <title>Genotype-phenotype correspondence in Sanfilippo syndrome type B.</title>
        <authorList>
            <person name="Zhao H.G."/>
            <person name="Aronovich E.L."/>
            <person name="Whitley C.B."/>
        </authorList>
    </citation>
    <scope>VARIANTS MPS3B CYS-140; CYS-455; LEU-521; GLY-612; CYS-674 AND HIS-674</scope>
</reference>
<reference key="10">
    <citation type="journal article" date="1998" name="Am. J. Hum. Genet.">
        <title>NAGLU mutations underlying Sanfilippo syndrome type B.</title>
        <authorList>
            <person name="Schmidtchen A."/>
            <person name="Greenberg D."/>
            <person name="Zhao H.G."/>
            <person name="Li H.H."/>
            <person name="Huang Y."/>
            <person name="Tieu P."/>
            <person name="Zhao H.-Z."/>
            <person name="Cheng S."/>
            <person name="Zhao Z."/>
            <person name="Whitley C.B."/>
            <person name="di Natale P."/>
            <person name="Neufeld E.F."/>
        </authorList>
    </citation>
    <scope>VARIANTS MPS3B HIS-92; SER-115; CYS-140; LYS-153; LEU-358; VAL-664 AND ARG-682</scope>
</reference>
<reference key="11">
    <citation type="journal article" date="1998" name="J. Med. Genet.">
        <title>Identification of 12 novel mutations in the alpha-N-acetylglucosaminidase gene in 14 patients with Sanfilippo syndrome type B (mucopolysaccharidosis type IIIB).</title>
        <authorList>
            <person name="Beesley C.E."/>
            <person name="Young E.P."/>
            <person name="Vellodi A."/>
            <person name="Winchester B.G."/>
        </authorList>
    </citation>
    <scope>VARIANTS MPS3B CYS-48; CYS-140; CYS-234; ARG-268; LEU-521; TRP-565; PRO-591 AND LYS-705</scope>
</reference>
<reference key="12">
    <citation type="journal article" date="1999" name="J. Med. Genet.">
        <title>Mucopolysaccharidosis type IIIB (Sanfilippo B): identification of 18 novel alpha-N-acetylglucosaminidase gene mutations.</title>
        <authorList>
            <person name="Bunge S."/>
            <person name="Knigge A."/>
            <person name="Steglich C."/>
            <person name="Kleijer W.J."/>
            <person name="van Diggelen O.P."/>
            <person name="Beck M."/>
            <person name="Gal A."/>
        </authorList>
    </citation>
    <scope>VARIANTS MPS3B CYS-79; ARG-100; CYS-140; PHE-142 DEL; LEU-243; PHE-277; PRO-280; ARG-292; LYS-452; TRP-482; ARG-561; GLN-565; HIS-674 AND LYS-705</scope>
    <scope>VARIANT GLY-737</scope>
</reference>
<reference key="13">
    <citation type="journal article" date="1999" name="Eur. J. Hum. Genet.">
        <title>Sanfilippo type B syndrome (mucopolysaccharidosis III B): allelic heterogeneity corresponds to the wide spectrum of clinical phenotypes.</title>
        <authorList>
            <person name="Weber B."/>
            <person name="Guo X.-H."/>
            <person name="Kleijer W.J."/>
            <person name="van de Kamp J.J.P."/>
            <person name="Poorthuis B.J.H.M."/>
            <person name="Hopwood J.J."/>
        </authorList>
    </citation>
    <scope>VARIANTS MPS3B LEU-48; SER-69; PRO-227; ARG-248; ARG-292; PHE-334; SER-410; ARG-414; LEU-521; PRO-560; PRO-565; TRP-565; PHE-617; CYS-643; GLU-650; CYS-674 AND PRO-676</scope>
    <scope>VARIANT GLY-737</scope>
</reference>
<reference key="14">
    <citation type="journal article" date="2000" name="Biochim. Biophys. Acta">
        <title>Mucopolysaccharidosis type IIIB: characterisation and expression of wild-type and mutant recombinant alpha-N-acetylglucosaminidase and relationship with sanfilippo phenotype in an attenuated patient.</title>
        <authorList>
            <person name="Yogalingam G."/>
            <person name="Weber B."/>
            <person name="Meehan J."/>
            <person name="Rogers J."/>
            <person name="Hopwood J.J."/>
        </authorList>
    </citation>
    <scope>VARIANT MPS3B LEU-48</scope>
    <scope>CHARACTERIZATION OF VARIANT MPS3B LEU-48</scope>
</reference>
<reference key="15">
    <citation type="journal article" date="2000" name="Hum. Genet.">
        <title>Molecular defects in the alpha-N-acetylglucosaminidase gene in Italian Sanfilippo type B patients.</title>
        <authorList>
            <person name="Tessitore A."/>
            <person name="Villani G.R.D."/>
            <person name="Di Domenico C."/>
            <person name="Filocamo M."/>
            <person name="Gatti R."/>
            <person name="Di Natale P."/>
        </authorList>
    </citation>
    <scope>VARIANTS MPS3B PHE-35; ASP-82; CYS-140; CYS-156; CYS-234; ARG-292; GLY-501; TRP-520; TYR-534 AND CYS-649</scope>
    <scope>CHARACTERIZATION OF VARIANTS MPS3B PHE-35; ASP-82; CYS-156; GLY-501; TRP-520; TYR-534 AND CYS-649</scope>
</reference>
<reference key="16">
    <citation type="journal article" date="2001" name="J. Inherit. Metab. Dis.">
        <title>Allelic heterogeneity in Spanish patients with Sanfilippo disease type B. Identification of eight new mutations.</title>
        <authorList>
            <person name="Coll M.J."/>
            <person name="Anton C."/>
            <person name="Chabas A."/>
        </authorList>
    </citation>
    <scope>VARIANTS MPS3B SER-79; CYS-234; GLY-474; TRP-565 AND PHE-658</scope>
</reference>
<reference key="17">
    <citation type="journal article" date="2002" name="Hum. Mutat.">
        <title>Sanfilippo syndrome in Turkey: identification of novel mutations in subtypes A and B.</title>
        <authorList>
            <person name="Emre S."/>
            <person name="Terzioglu M."/>
            <person name="Tokatli A."/>
            <person name="Coskun T."/>
            <person name="Ozalp I."/>
            <person name="Weber B."/>
            <person name="Hopwood J.J."/>
        </authorList>
    </citation>
    <scope>VARIANTS MPS3B LYS-153; ARG-248; ILE-437 AND ARG-682</scope>
</reference>
<reference key="18">
    <citation type="journal article" date="2002" name="J. Hum. Genet.">
        <title>Molecular analysis of the alpha-N-acetylglucosaminidase gene in seven Japanese patients from six unrelated families with mucopolysaccharidosis IIIB (Sanfilippo type B), including two novel mutations.</title>
        <authorList>
            <person name="Tanaka A."/>
            <person name="Kimura M."/>
            <person name="Lan H.T.N."/>
            <person name="Takaura N."/>
            <person name="Yamano T."/>
        </authorList>
    </citation>
    <scope>VARIANTS MPS3B MET-241; LEU-314; TRP-482; PRO-565 AND TRP-565</scope>
</reference>
<reference key="19">
    <citation type="journal article" date="2002" name="J. Med. Genet.">
        <title>Identification and characterisation of mutations underlying Sanfilippo syndrome type B (mucopolysaccharidosis type IIIB).</title>
        <authorList>
            <person name="Lee-Chen G.J."/>
            <person name="Lin S.P."/>
            <person name="Lin S.Z."/>
            <person name="Chuang C.K."/>
            <person name="Hsiao K.T."/>
            <person name="Huang C.F."/>
            <person name="Lien W.C."/>
        </authorList>
    </citation>
    <scope>VARIANTS MPS3B CYS-130; ARG-154; CYS-309; GLU-412 AND TRP-565</scope>
    <scope>CHARACTERIZATION OF VARIANTS MPS3B CYS-130; ARG-154; CYS-309; GLU-412 AND TRP-565</scope>
</reference>
<reference key="20">
    <citation type="journal article" date="2004" name="Clin. Genet.">
        <title>Sanfilippo B syndrome: molecular defects in Greek patients.</title>
        <authorList>
            <person name="Beesley C."/>
            <person name="Moraitou M."/>
            <person name="Winchester B."/>
            <person name="Schulpis K."/>
            <person name="Dimitriou E."/>
            <person name="Michelakakis H."/>
        </authorList>
    </citation>
    <scope>VARIANTS MPS3B CYS-140; PRO-242; ARG-292; ARG-414; LYS-446; LYS-452; GLN-482 AND LEU-516</scope>
    <scope>CHARACTERIZATION OF VARIANTS MPS3B PRO-242; ARG-414; LYS-446; GLN-482 AND LEU-516</scope>
</reference>
<reference key="21">
    <citation type="journal article" date="2005" name="J. Hum. Genet.">
        <title>Sanfilippo type B syndrome: five patients with an R565P homozygous mutation in the alpha-N-acetylglucosaminidase gene from the Okinawa islands in Japan.</title>
        <authorList>
            <person name="Chinen Y."/>
            <person name="Tohma T."/>
            <person name="Izumikawa Y."/>
            <person name="Uehara H."/>
            <person name="Ohta T."/>
        </authorList>
    </citation>
    <scope>VARIANT MPS3B PRO-565</scope>
</reference>
<reference key="22">
    <citation type="journal article" date="2005" name="J. Inherit. Metab. Dis.">
        <title>Molecular defects in Sanfilippo syndrome type B (mucopolysaccharidosis IIIB).</title>
        <authorList>
            <person name="Beesley C.E."/>
            <person name="Jackson M."/>
            <person name="Young E.P."/>
            <person name="Vellodi A."/>
            <person name="Winchester B.G."/>
        </authorList>
    </citation>
    <scope>VARIANTS MPS3B TRP-38; GLY-77; CYS-79; CYS-130; PRO-246; CYS-309; CYS-335; ARG-414; LYS-452; TRP-482; TRP-520; LEU-521 AND TRP-565</scope>
    <scope>CHARACTERIZATION OF VARIANTS MPS3B TRP-38; GLY-77 AND CYS-335</scope>
</reference>
<reference key="23">
    <citation type="journal article" date="2017" name="World J. Pediatr.">
        <title>Update of the spectrum of mucopolysaccharidoses type III in Tunisia: identification of three novel mutations and in silico structural analysis of the missense mutations.</title>
        <authorList>
            <person name="Ouesleti S."/>
            <person name="Coutinho M.F."/>
            <person name="Ribeiro I."/>
            <person name="Miled A."/>
            <person name="Mosbahi D.S."/>
            <person name="Alves S."/>
        </authorList>
    </citation>
    <scope>VARIANTS MPS3B 153-GLU--TRP-743 DEL AND PRO-550</scope>
</reference>
<name>ANAG_HUMAN</name>
<dbReference type="EC" id="3.2.1.50"/>
<dbReference type="EMBL" id="U43572">
    <property type="protein sequence ID" value="AAC50512.1"/>
    <property type="molecule type" value="Genomic_DNA"/>
</dbReference>
<dbReference type="EMBL" id="U43573">
    <property type="protein sequence ID" value="AAC50513.1"/>
    <property type="molecule type" value="mRNA"/>
</dbReference>
<dbReference type="EMBL" id="U40846">
    <property type="protein sequence ID" value="AAB06188.1"/>
    <property type="molecule type" value="mRNA"/>
</dbReference>
<dbReference type="EMBL" id="L78464">
    <property type="protein sequence ID" value="AAB36604.1"/>
    <property type="molecule type" value="mRNA"/>
</dbReference>
<dbReference type="EMBL" id="AC067852">
    <property type="status" value="NOT_ANNOTATED_CDS"/>
    <property type="molecule type" value="Genomic_DNA"/>
</dbReference>
<dbReference type="EMBL" id="BC053991">
    <property type="protein sequence ID" value="AAH53991.1"/>
    <property type="molecule type" value="mRNA"/>
</dbReference>
<dbReference type="CCDS" id="CCDS11427.1"/>
<dbReference type="PIR" id="G02270">
    <property type="entry name" value="G02270"/>
</dbReference>
<dbReference type="RefSeq" id="NP_000254.2">
    <property type="nucleotide sequence ID" value="NM_000263.4"/>
</dbReference>
<dbReference type="PDB" id="4XWH">
    <property type="method" value="X-ray"/>
    <property type="resolution" value="2.32 A"/>
    <property type="chains" value="A=24-743"/>
</dbReference>
<dbReference type="PDBsum" id="4XWH"/>
<dbReference type="SMR" id="P54802"/>
<dbReference type="BioGRID" id="110750">
    <property type="interactions" value="122"/>
</dbReference>
<dbReference type="FunCoup" id="P54802">
    <property type="interactions" value="687"/>
</dbReference>
<dbReference type="IntAct" id="P54802">
    <property type="interactions" value="66"/>
</dbReference>
<dbReference type="MINT" id="P54802"/>
<dbReference type="STRING" id="9606.ENSP00000225927"/>
<dbReference type="ChEMBL" id="CHEMBL5465292"/>
<dbReference type="DrugBank" id="DB06773">
    <property type="generic name" value="Human calcitonin"/>
</dbReference>
<dbReference type="DrugBank" id="DB00141">
    <property type="generic name" value="N-Acetylglucosamine"/>
</dbReference>
<dbReference type="CAZy" id="GH89">
    <property type="family name" value="Glycoside Hydrolase Family 89"/>
</dbReference>
<dbReference type="GlyConnect" id="803">
    <property type="glycosylation" value="36 N-Linked glycans (5 sites)"/>
</dbReference>
<dbReference type="GlyCosmos" id="P54802">
    <property type="glycosylation" value="7 sites, 38 glycans"/>
</dbReference>
<dbReference type="GlyGen" id="P54802">
    <property type="glycosylation" value="8 sites, 70 N-linked glycans (6 sites), 1 O-linked glycan (1 site)"/>
</dbReference>
<dbReference type="iPTMnet" id="P54802"/>
<dbReference type="PhosphoSitePlus" id="P54802"/>
<dbReference type="SwissPalm" id="P54802"/>
<dbReference type="BioMuta" id="NAGLU"/>
<dbReference type="DMDM" id="317373322"/>
<dbReference type="jPOST" id="P54802"/>
<dbReference type="MassIVE" id="P54802"/>
<dbReference type="PaxDb" id="9606-ENSP00000225927"/>
<dbReference type="PeptideAtlas" id="P54802"/>
<dbReference type="ProteomicsDB" id="56721"/>
<dbReference type="Pumba" id="P54802"/>
<dbReference type="TopDownProteomics" id="P54802"/>
<dbReference type="Antibodypedia" id="29263">
    <property type="antibodies" value="95 antibodies from 20 providers"/>
</dbReference>
<dbReference type="DNASU" id="4669"/>
<dbReference type="Ensembl" id="ENST00000225927.7">
    <property type="protein sequence ID" value="ENSP00000225927.1"/>
    <property type="gene ID" value="ENSG00000108784.10"/>
</dbReference>
<dbReference type="GeneID" id="4669"/>
<dbReference type="KEGG" id="hsa:4669"/>
<dbReference type="MANE-Select" id="ENST00000225927.7">
    <property type="protein sequence ID" value="ENSP00000225927.1"/>
    <property type="RefSeq nucleotide sequence ID" value="NM_000263.4"/>
    <property type="RefSeq protein sequence ID" value="NP_000254.2"/>
</dbReference>
<dbReference type="UCSC" id="uc002hzv.4">
    <property type="organism name" value="human"/>
</dbReference>
<dbReference type="AGR" id="HGNC:7632"/>
<dbReference type="CTD" id="4669"/>
<dbReference type="DisGeNET" id="4669"/>
<dbReference type="GeneCards" id="NAGLU"/>
<dbReference type="GeneReviews" id="NAGLU"/>
<dbReference type="HGNC" id="HGNC:7632">
    <property type="gene designation" value="NAGLU"/>
</dbReference>
<dbReference type="HPA" id="ENSG00000108784">
    <property type="expression patterns" value="Low tissue specificity"/>
</dbReference>
<dbReference type="MalaCards" id="NAGLU"/>
<dbReference type="MIM" id="252920">
    <property type="type" value="phenotype"/>
</dbReference>
<dbReference type="MIM" id="609701">
    <property type="type" value="gene"/>
</dbReference>
<dbReference type="MIM" id="616491">
    <property type="type" value="phenotype"/>
</dbReference>
<dbReference type="neXtProt" id="NX_P54802"/>
<dbReference type="OpenTargets" id="ENSG00000108784"/>
<dbReference type="Orphanet" id="447964">
    <property type="disease" value="Autosomal dominant Charcot-Marie-Tooth disease type 2V"/>
</dbReference>
<dbReference type="Orphanet" id="79270">
    <property type="disease" value="Sanfilippo syndrome type B"/>
</dbReference>
<dbReference type="PharmGKB" id="PA31437"/>
<dbReference type="VEuPathDB" id="HostDB:ENSG00000108784"/>
<dbReference type="eggNOG" id="KOG2233">
    <property type="taxonomic scope" value="Eukaryota"/>
</dbReference>
<dbReference type="GeneTree" id="ENSGT00390000005900"/>
<dbReference type="HOGENOM" id="CLU_011988_2_1_1"/>
<dbReference type="InParanoid" id="P54802"/>
<dbReference type="OMA" id="YGQPFVW"/>
<dbReference type="OrthoDB" id="64736at2759"/>
<dbReference type="PAN-GO" id="P54802">
    <property type="GO annotations" value="0 GO annotations based on evolutionary models"/>
</dbReference>
<dbReference type="PhylomeDB" id="P54802"/>
<dbReference type="TreeFam" id="TF300689"/>
<dbReference type="BRENDA" id="3.2.1.50">
    <property type="organism ID" value="2681"/>
</dbReference>
<dbReference type="PathwayCommons" id="P54802"/>
<dbReference type="Reactome" id="R-HSA-2024096">
    <property type="pathway name" value="HS-GAG degradation"/>
</dbReference>
<dbReference type="Reactome" id="R-HSA-2206282">
    <property type="pathway name" value="MPS IIIB - Sanfilippo syndrome B"/>
</dbReference>
<dbReference type="SignaLink" id="P54802"/>
<dbReference type="SIGNOR" id="P54802"/>
<dbReference type="BioGRID-ORCS" id="4669">
    <property type="hits" value="103 hits in 1164 CRISPR screens"/>
</dbReference>
<dbReference type="ChiTaRS" id="NAGLU">
    <property type="organism name" value="human"/>
</dbReference>
<dbReference type="EvolutionaryTrace" id="P54802"/>
<dbReference type="GenomeRNAi" id="4669"/>
<dbReference type="Pharos" id="P54802">
    <property type="development level" value="Tbio"/>
</dbReference>
<dbReference type="PRO" id="PR:P54802"/>
<dbReference type="Proteomes" id="UP000005640">
    <property type="component" value="Chromosome 17"/>
</dbReference>
<dbReference type="RNAct" id="P54802">
    <property type="molecule type" value="protein"/>
</dbReference>
<dbReference type="Bgee" id="ENSG00000108784">
    <property type="expression patterns" value="Expressed in stromal cell of endometrium and 191 other cell types or tissues"/>
</dbReference>
<dbReference type="ExpressionAtlas" id="P54802">
    <property type="expression patterns" value="baseline and differential"/>
</dbReference>
<dbReference type="GO" id="GO:0070062">
    <property type="term" value="C:extracellular exosome"/>
    <property type="evidence" value="ECO:0000314"/>
    <property type="project" value="UniProtKB"/>
</dbReference>
<dbReference type="GO" id="GO:0043202">
    <property type="term" value="C:lysosomal lumen"/>
    <property type="evidence" value="ECO:0000304"/>
    <property type="project" value="Reactome"/>
</dbReference>
<dbReference type="GO" id="GO:0005764">
    <property type="term" value="C:lysosome"/>
    <property type="evidence" value="ECO:0000304"/>
    <property type="project" value="ProtInc"/>
</dbReference>
<dbReference type="GO" id="GO:0016020">
    <property type="term" value="C:membrane"/>
    <property type="evidence" value="ECO:0007669"/>
    <property type="project" value="GOC"/>
</dbReference>
<dbReference type="GO" id="GO:0004561">
    <property type="term" value="F:alpha-N-acetylglucosaminidase activity"/>
    <property type="evidence" value="ECO:0000304"/>
    <property type="project" value="Reactome"/>
</dbReference>
<dbReference type="GO" id="GO:0030534">
    <property type="term" value="P:adult behavior"/>
    <property type="evidence" value="ECO:0007669"/>
    <property type="project" value="Ensembl"/>
</dbReference>
<dbReference type="GO" id="GO:0042982">
    <property type="term" value="P:amyloid precursor protein metabolic process"/>
    <property type="evidence" value="ECO:0007669"/>
    <property type="project" value="Ensembl"/>
</dbReference>
<dbReference type="GO" id="GO:0035909">
    <property type="term" value="P:aorta morphogenesis"/>
    <property type="evidence" value="ECO:0007669"/>
    <property type="project" value="Ensembl"/>
</dbReference>
<dbReference type="GO" id="GO:0048143">
    <property type="term" value="P:astrocyte activation"/>
    <property type="evidence" value="ECO:0007669"/>
    <property type="project" value="Ensembl"/>
</dbReference>
<dbReference type="GO" id="GO:0006914">
    <property type="term" value="P:autophagy"/>
    <property type="evidence" value="ECO:0007669"/>
    <property type="project" value="Ensembl"/>
</dbReference>
<dbReference type="GO" id="GO:0055013">
    <property type="term" value="P:cardiac muscle cell development"/>
    <property type="evidence" value="ECO:0007669"/>
    <property type="project" value="Ensembl"/>
</dbReference>
<dbReference type="GO" id="GO:0097696">
    <property type="term" value="P:cell surface receptor signaling pathway via STAT"/>
    <property type="evidence" value="ECO:0007669"/>
    <property type="project" value="Ensembl"/>
</dbReference>
<dbReference type="GO" id="GO:0034599">
    <property type="term" value="P:cellular response to oxidative stress"/>
    <property type="evidence" value="ECO:0007669"/>
    <property type="project" value="Ensembl"/>
</dbReference>
<dbReference type="GO" id="GO:0021680">
    <property type="term" value="P:cerebellar Purkinje cell layer development"/>
    <property type="evidence" value="ECO:0007669"/>
    <property type="project" value="Ensembl"/>
</dbReference>
<dbReference type="GO" id="GO:0032963">
    <property type="term" value="P:collagen metabolic process"/>
    <property type="evidence" value="ECO:0007669"/>
    <property type="project" value="Ensembl"/>
</dbReference>
<dbReference type="GO" id="GO:1904390">
    <property type="term" value="P:cone retinal bipolar cell differentiation"/>
    <property type="evidence" value="ECO:0007669"/>
    <property type="project" value="Ensembl"/>
</dbReference>
<dbReference type="GO" id="GO:0007028">
    <property type="term" value="P:cytoplasm organization"/>
    <property type="evidence" value="ECO:0007669"/>
    <property type="project" value="Ensembl"/>
</dbReference>
<dbReference type="GO" id="GO:0008340">
    <property type="term" value="P:determination of adult lifespan"/>
    <property type="evidence" value="ECO:0007669"/>
    <property type="project" value="Ensembl"/>
</dbReference>
<dbReference type="GO" id="GO:0003158">
    <property type="term" value="P:endothelium development"/>
    <property type="evidence" value="ECO:0007669"/>
    <property type="project" value="Ensembl"/>
</dbReference>
<dbReference type="GO" id="GO:0035640">
    <property type="term" value="P:exploration behavior"/>
    <property type="evidence" value="ECO:0007669"/>
    <property type="project" value="Ensembl"/>
</dbReference>
<dbReference type="GO" id="GO:0001573">
    <property type="term" value="P:ganglioside metabolic process"/>
    <property type="evidence" value="ECO:0007669"/>
    <property type="project" value="Ensembl"/>
</dbReference>
<dbReference type="GO" id="GO:0030203">
    <property type="term" value="P:glycosaminoglycan metabolic process"/>
    <property type="evidence" value="ECO:0007669"/>
    <property type="project" value="Ensembl"/>
</dbReference>
<dbReference type="GO" id="GO:0007030">
    <property type="term" value="P:Golgi organization"/>
    <property type="evidence" value="ECO:0007669"/>
    <property type="project" value="Ensembl"/>
</dbReference>
<dbReference type="GO" id="GO:0031069">
    <property type="term" value="P:hair follicle morphogenesis"/>
    <property type="evidence" value="ECO:0007669"/>
    <property type="project" value="Ensembl"/>
</dbReference>
<dbReference type="GO" id="GO:0030200">
    <property type="term" value="P:heparan sulfate proteoglycan catabolic process"/>
    <property type="evidence" value="ECO:0000304"/>
    <property type="project" value="Reactome"/>
</dbReference>
<dbReference type="GO" id="GO:0030202">
    <property type="term" value="P:heparin proteoglycan metabolic process"/>
    <property type="evidence" value="ECO:0007669"/>
    <property type="project" value="Ensembl"/>
</dbReference>
<dbReference type="GO" id="GO:0042445">
    <property type="term" value="P:hormone metabolic process"/>
    <property type="evidence" value="ECO:0007669"/>
    <property type="project" value="Ensembl"/>
</dbReference>
<dbReference type="GO" id="GO:0060119">
    <property type="term" value="P:inner ear receptor cell development"/>
    <property type="evidence" value="ECO:0007669"/>
    <property type="project" value="Ensembl"/>
</dbReference>
<dbReference type="GO" id="GO:0003220">
    <property type="term" value="P:left ventricular cardiac muscle tissue morphogenesis"/>
    <property type="evidence" value="ECO:0007669"/>
    <property type="project" value="Ensembl"/>
</dbReference>
<dbReference type="GO" id="GO:0060173">
    <property type="term" value="P:limb development"/>
    <property type="evidence" value="ECO:0007669"/>
    <property type="project" value="Ensembl"/>
</dbReference>
<dbReference type="GO" id="GO:0016042">
    <property type="term" value="P:lipid catabolic process"/>
    <property type="evidence" value="ECO:0007669"/>
    <property type="project" value="Ensembl"/>
</dbReference>
<dbReference type="GO" id="GO:0001889">
    <property type="term" value="P:liver development"/>
    <property type="evidence" value="ECO:0007669"/>
    <property type="project" value="Ensembl"/>
</dbReference>
<dbReference type="GO" id="GO:0045475">
    <property type="term" value="P:locomotor rhythm"/>
    <property type="evidence" value="ECO:0007669"/>
    <property type="project" value="Ensembl"/>
</dbReference>
<dbReference type="GO" id="GO:0007040">
    <property type="term" value="P:lysosome organization"/>
    <property type="evidence" value="ECO:0007669"/>
    <property type="project" value="Ensembl"/>
</dbReference>
<dbReference type="GO" id="GO:0035633">
    <property type="term" value="P:maintenance of blood-brain barrier"/>
    <property type="evidence" value="ECO:0007669"/>
    <property type="project" value="Ensembl"/>
</dbReference>
<dbReference type="GO" id="GO:0014004">
    <property type="term" value="P:microglia differentiation"/>
    <property type="evidence" value="ECO:0007669"/>
    <property type="project" value="Ensembl"/>
</dbReference>
<dbReference type="GO" id="GO:0001774">
    <property type="term" value="P:microglial cell activation"/>
    <property type="evidence" value="ECO:0007669"/>
    <property type="project" value="Ensembl"/>
</dbReference>
<dbReference type="GO" id="GO:0042474">
    <property type="term" value="P:middle ear morphogenesis"/>
    <property type="evidence" value="ECO:0007669"/>
    <property type="project" value="Ensembl"/>
</dbReference>
<dbReference type="GO" id="GO:0003183">
    <property type="term" value="P:mitral valve morphogenesis"/>
    <property type="evidence" value="ECO:0007669"/>
    <property type="project" value="Ensembl"/>
</dbReference>
<dbReference type="GO" id="GO:0061744">
    <property type="term" value="P:motor behavior"/>
    <property type="evidence" value="ECO:0007669"/>
    <property type="project" value="Ensembl"/>
</dbReference>
<dbReference type="GO" id="GO:0060586">
    <property type="term" value="P:multicellular organismal-level iron ion homeostasis"/>
    <property type="evidence" value="ECO:0007669"/>
    <property type="project" value="Ensembl"/>
</dbReference>
<dbReference type="GO" id="GO:0021675">
    <property type="term" value="P:nerve development"/>
    <property type="evidence" value="ECO:0007669"/>
    <property type="project" value="Ensembl"/>
</dbReference>
<dbReference type="GO" id="GO:0007399">
    <property type="term" value="P:nervous system development"/>
    <property type="evidence" value="ECO:0000304"/>
    <property type="project" value="ProtInc"/>
</dbReference>
<dbReference type="GO" id="GO:0043161">
    <property type="term" value="P:proteasome-mediated ubiquitin-dependent protein catabolic process"/>
    <property type="evidence" value="ECO:0007669"/>
    <property type="project" value="Ensembl"/>
</dbReference>
<dbReference type="GO" id="GO:0016485">
    <property type="term" value="P:protein processing"/>
    <property type="evidence" value="ECO:0007669"/>
    <property type="project" value="Ensembl"/>
</dbReference>
<dbReference type="GO" id="GO:0034285">
    <property type="term" value="P:response to disaccharide"/>
    <property type="evidence" value="ECO:0007669"/>
    <property type="project" value="Ensembl"/>
</dbReference>
<dbReference type="GO" id="GO:0032496">
    <property type="term" value="P:response to lipopolysaccharide"/>
    <property type="evidence" value="ECO:0007669"/>
    <property type="project" value="Ensembl"/>
</dbReference>
<dbReference type="GO" id="GO:0009611">
    <property type="term" value="P:response to wounding"/>
    <property type="evidence" value="ECO:0007669"/>
    <property type="project" value="Ensembl"/>
</dbReference>
<dbReference type="GO" id="GO:0046548">
    <property type="term" value="P:retinal rod cell development"/>
    <property type="evidence" value="ECO:0007669"/>
    <property type="project" value="Ensembl"/>
</dbReference>
<dbReference type="GO" id="GO:1904389">
    <property type="term" value="P:rod bipolar cell differentiation"/>
    <property type="evidence" value="ECO:0007669"/>
    <property type="project" value="Ensembl"/>
</dbReference>
<dbReference type="GO" id="GO:0006801">
    <property type="term" value="P:superoxide metabolic process"/>
    <property type="evidence" value="ECO:0007669"/>
    <property type="project" value="Ensembl"/>
</dbReference>
<dbReference type="GO" id="GO:0034142">
    <property type="term" value="P:toll-like receptor 4 signaling pathway"/>
    <property type="evidence" value="ECO:0007669"/>
    <property type="project" value="Ensembl"/>
</dbReference>
<dbReference type="GO" id="GO:0099022">
    <property type="term" value="P:vesicle tethering"/>
    <property type="evidence" value="ECO:0007669"/>
    <property type="project" value="Ensembl"/>
</dbReference>
<dbReference type="FunFam" id="3.20.20.80:FF:000107">
    <property type="entry name" value="Alpha-N-acetylglucosaminidase family"/>
    <property type="match status" value="1"/>
</dbReference>
<dbReference type="FunFam" id="1.20.120.670:FF:000001">
    <property type="entry name" value="N-acetyl-alpha-glucosaminidase"/>
    <property type="match status" value="1"/>
</dbReference>
<dbReference type="FunFam" id="3.30.379.10:FF:000005">
    <property type="entry name" value="N-acetyl-alpha-glucosaminidase"/>
    <property type="match status" value="1"/>
</dbReference>
<dbReference type="Gene3D" id="3.30.379.10">
    <property type="entry name" value="Chitobiase/beta-hexosaminidase domain 2-like"/>
    <property type="match status" value="1"/>
</dbReference>
<dbReference type="Gene3D" id="3.20.20.80">
    <property type="entry name" value="Glycosidases"/>
    <property type="match status" value="1"/>
</dbReference>
<dbReference type="Gene3D" id="1.20.120.670">
    <property type="entry name" value="N-acetyl-b-d-glucoasminidase"/>
    <property type="match status" value="1"/>
</dbReference>
<dbReference type="InterPro" id="IPR017853">
    <property type="entry name" value="Glycoside_hydrolase_SF"/>
</dbReference>
<dbReference type="InterPro" id="IPR029018">
    <property type="entry name" value="Hex-like_dom2"/>
</dbReference>
<dbReference type="InterPro" id="IPR007781">
    <property type="entry name" value="NAGLU"/>
</dbReference>
<dbReference type="InterPro" id="IPR024732">
    <property type="entry name" value="NAGLU_C"/>
</dbReference>
<dbReference type="InterPro" id="IPR024240">
    <property type="entry name" value="NAGLU_N"/>
</dbReference>
<dbReference type="InterPro" id="IPR024733">
    <property type="entry name" value="NAGLU_tim-barrel"/>
</dbReference>
<dbReference type="PANTHER" id="PTHR12872">
    <property type="entry name" value="ALPHA-N-ACETYLGLUCOSAMINIDASE"/>
    <property type="match status" value="1"/>
</dbReference>
<dbReference type="PANTHER" id="PTHR12872:SF1">
    <property type="entry name" value="ALPHA-N-ACETYLGLUCOSAMINIDASE"/>
    <property type="match status" value="1"/>
</dbReference>
<dbReference type="Pfam" id="PF05089">
    <property type="entry name" value="NAGLU"/>
    <property type="match status" value="1"/>
</dbReference>
<dbReference type="Pfam" id="PF12972">
    <property type="entry name" value="NAGLU_C"/>
    <property type="match status" value="1"/>
</dbReference>
<dbReference type="Pfam" id="PF12971">
    <property type="entry name" value="NAGLU_N"/>
    <property type="match status" value="1"/>
</dbReference>
<dbReference type="SUPFAM" id="SSF51445">
    <property type="entry name" value="(Trans)glycosidases"/>
    <property type="match status" value="1"/>
</dbReference>
<sequence>MEAVAVAAAVGVLLLAGAGGAAGDEAREAAAVRALVARLLGPGPAADFSVSVERALAAKPGLDTYSLGGGGAARVRVRGSTGVAAAAGLHRYLRDFCGCHVAWSGSQLRLPRPLPAVPGELTEATPNRYRYYQNVCTQSYSFVWWDWARWEREIDWMALNGINLALAWSGQEAIWQRVYLALGLTQAEINEFFTGPAFLAWGRMGNLHTWDGPLPPSWHIKQLYLQHRVLDQMRSFGMTPVLPAFAGHVPEAVTRVFPQVNVTKMGSWGHFNCSYSCSFLLAPEDPIFPIIGSLFLRELIKEFGTDHIYGADTFNEMQPPSSEPSYLAAATTAVYEAMTAVDTEAVWLLQGWLFQHQPQFWGPAQIRAVLGAVPRGRLLVLDLFAESQPVYTRTASFQGQPFIWCMLHNFGGNHGLFGALEAVNGGPEAARLFPNSTMVGTGMAPEGISQNEVVYSLMAELGWRKDPVPDLAAWVTSFAARRYGVSHPDAGAAWRLLLRSVYNCSGEACRGHNRSPLVRRPSLQMNTSIWYNRSDVFEAWRLLLTSAPSLATSPAFRYDLLDLTRQAVQELVSLYYEEARSAYLSKELASLLRAGGVLAYELLPALDEVLASDSRFLLGSWLEQARAAAVSEAEADFYEQNSRYQLTLWGPEGNILDYANKQLAGLVANYYTPRWRLFLEALVDSVAQGIPFQQHQFDKNVFQLEQAFVLSKQRYPSQPRGDTVDLAKKIFLKYYPRWVAGSW</sequence>
<organism>
    <name type="scientific">Homo sapiens</name>
    <name type="common">Human</name>
    <dbReference type="NCBI Taxonomy" id="9606"/>
    <lineage>
        <taxon>Eukaryota</taxon>
        <taxon>Metazoa</taxon>
        <taxon>Chordata</taxon>
        <taxon>Craniata</taxon>
        <taxon>Vertebrata</taxon>
        <taxon>Euteleostomi</taxon>
        <taxon>Mammalia</taxon>
        <taxon>Eutheria</taxon>
        <taxon>Euarchontoglires</taxon>
        <taxon>Primates</taxon>
        <taxon>Haplorrhini</taxon>
        <taxon>Catarrhini</taxon>
        <taxon>Hominidae</taxon>
        <taxon>Homo</taxon>
    </lineage>
</organism>
<evidence type="ECO:0000269" key="1">
    <source>
    </source>
</evidence>
<evidence type="ECO:0000269" key="2">
    <source>
    </source>
</evidence>
<evidence type="ECO:0000269" key="3">
    <source>
    </source>
</evidence>
<evidence type="ECO:0000269" key="4">
    <source>
    </source>
</evidence>
<evidence type="ECO:0000269" key="5">
    <source>
    </source>
</evidence>
<evidence type="ECO:0000269" key="6">
    <source>
    </source>
</evidence>
<evidence type="ECO:0000269" key="7">
    <source>
    </source>
</evidence>
<evidence type="ECO:0000269" key="8">
    <source>
    </source>
</evidence>
<evidence type="ECO:0000269" key="9">
    <source>
    </source>
</evidence>
<evidence type="ECO:0000269" key="10">
    <source>
    </source>
</evidence>
<evidence type="ECO:0000269" key="11">
    <source>
    </source>
</evidence>
<evidence type="ECO:0000269" key="12">
    <source>
    </source>
</evidence>
<evidence type="ECO:0000269" key="13">
    <source>
    </source>
</evidence>
<evidence type="ECO:0000269" key="14">
    <source>
    </source>
</evidence>
<evidence type="ECO:0000269" key="15">
    <source>
    </source>
</evidence>
<evidence type="ECO:0000269" key="16">
    <source>
    </source>
</evidence>
<evidence type="ECO:0000269" key="17">
    <source>
    </source>
</evidence>
<evidence type="ECO:0000269" key="18">
    <source>
    </source>
</evidence>
<evidence type="ECO:0000269" key="19">
    <source>
    </source>
</evidence>
<evidence type="ECO:0000269" key="20">
    <source>
    </source>
</evidence>
<evidence type="ECO:0000269" key="21">
    <source>
    </source>
</evidence>
<evidence type="ECO:0000269" key="22">
    <source ref="7"/>
</evidence>
<evidence type="ECO:0000305" key="23"/>
<evidence type="ECO:0000305" key="24">
    <source>
    </source>
</evidence>
<evidence type="ECO:0007744" key="25">
    <source>
        <dbReference type="PDB" id="4XWH"/>
    </source>
</evidence>
<evidence type="ECO:0007829" key="26">
    <source>
        <dbReference type="PDB" id="4XWH"/>
    </source>
</evidence>
<gene>
    <name type="primary">NAGLU</name>
    <name type="synonym">UFHSD1</name>
</gene>
<comment type="function">
    <text>Involved in the degradation of heparan sulfate.</text>
</comment>
<comment type="catalytic activity">
    <reaction>
        <text>Hydrolysis of terminal non-reducing N-acetyl-D-glucosamine residues in N-acetyl-alpha-D-glucosaminides.</text>
        <dbReference type="EC" id="3.2.1.50"/>
    </reaction>
</comment>
<comment type="subunit">
    <text>Monomer and homodimer.</text>
</comment>
<comment type="subcellular location">
    <subcellularLocation>
        <location>Lysosome</location>
    </subcellularLocation>
</comment>
<comment type="tissue specificity">
    <text>Liver, ovary, peripheral blood leukocytes, testis, prostate, spleen, colon, lung, placenta and kidney.</text>
</comment>
<comment type="disease" evidence="1 2 3 4 5 6 7 8 10 11 14 15 18 19 20 21">
    <disease id="DI-00775">
        <name>Mucopolysaccharidosis 3B</name>
        <acronym>MPS3B</acronym>
        <description>A form of mucopolysaccharidosis type 3, an autosomal recessive lysosomal storage disease due to impaired degradation of heparan sulfate. MPS3 is characterized by severe central nervous system degeneration, but only mild somatic disease. Onset of clinical features usually occurs between 2 and 6 years; severe neurologic degeneration occurs in most patients between 6 and 10 years of age, and death occurs typically during the second or third decade of life.</description>
        <dbReference type="MIM" id="252920"/>
    </disease>
    <text>The disease is caused by variants affecting the gene represented in this entry.</text>
</comment>
<comment type="disease" evidence="13">
    <disease id="DI-04496">
        <name>Charcot-Marie-Tooth disease, axonal, type 2V</name>
        <acronym>CMT2V</acronym>
        <description>An axonal form of Charcot-Marie-Tooth disease, a disorder of the peripheral nervous system, characterized by progressive weakness and atrophy, initially of the peroneal muscles and later of the distal muscles of the arms. Charcot-Marie-Tooth disease is classified in two main groups on the basis of electrophysiologic properties and histopathology: primary peripheral demyelinating neuropathies (designated CMT1 when they are dominantly inherited) and primary peripheral axonal neuropathies (CMT2). Neuropathies of the CMT2 group are characterized by signs of axonal degeneration in the absence of obvious myelin alterations, normal or slightly reduced nerve conduction velocities, and progressive distal muscle weakness and atrophy. CMT2V is an autosomal dominant sensory neuropathy with late onset. The main clinical feature is recurrent leg pain that progresses to constant painful paraesthesias in the feet and later the hands. As it evolves, some patients develop a mild sensory ataxia.</description>
        <dbReference type="MIM" id="616491"/>
    </disease>
    <text>The disease is caused by variants affecting the gene represented in this entry.</text>
</comment>
<comment type="similarity">
    <text evidence="23">Belongs to the glycosyl hydrolase 89 family.</text>
</comment>
<comment type="caution">
    <text evidence="24">A MPS3B mutation at position 100 was erroneously reported (PubMed:9950362) as an amino acid change from Arg to His. The right amino acid change is from His to Arg.</text>
</comment>
<proteinExistence type="evidence at protein level"/>